<protein>
    <recommendedName>
        <fullName>Transcriptional adapter 2-alpha</fullName>
    </recommendedName>
    <alternativeName>
        <fullName>Transcriptional adapter 2-like</fullName>
        <shortName>ADA2-like protein</shortName>
    </alternativeName>
</protein>
<proteinExistence type="evidence at transcript level"/>
<keyword id="KW-0158">Chromosome</keyword>
<keyword id="KW-0238">DNA-binding</keyword>
<keyword id="KW-0479">Metal-binding</keyword>
<keyword id="KW-0539">Nucleus</keyword>
<keyword id="KW-1185">Reference proteome</keyword>
<keyword id="KW-0804">Transcription</keyword>
<keyword id="KW-0805">Transcription regulation</keyword>
<keyword id="KW-0862">Zinc</keyword>
<keyword id="KW-0863">Zinc-finger</keyword>
<evidence type="ECO:0000250" key="1"/>
<evidence type="ECO:0000255" key="2">
    <source>
        <dbReference type="PROSITE-ProRule" id="PRU00228"/>
    </source>
</evidence>
<evidence type="ECO:0000255" key="3">
    <source>
        <dbReference type="PROSITE-ProRule" id="PRU00247"/>
    </source>
</evidence>
<evidence type="ECO:0000255" key="4">
    <source>
        <dbReference type="PROSITE-ProRule" id="PRU00624"/>
    </source>
</evidence>
<evidence type="ECO:0000256" key="5">
    <source>
        <dbReference type="SAM" id="MobiDB-lite"/>
    </source>
</evidence>
<gene>
    <name type="primary">TADA2A</name>
    <name type="synonym">TADA2L</name>
    <name type="ORF">RCJMB04_18k17</name>
</gene>
<feature type="chain" id="PRO_0000240671" description="Transcriptional adapter 2-alpha">
    <location>
        <begin position="1"/>
        <end position="446"/>
    </location>
</feature>
<feature type="domain" description="SANT" evidence="4">
    <location>
        <begin position="70"/>
        <end position="122"/>
    </location>
</feature>
<feature type="domain" description="SWIRM" evidence="3">
    <location>
        <begin position="359"/>
        <end position="446"/>
    </location>
</feature>
<feature type="zinc finger region" description="ZZ-type" evidence="2">
    <location>
        <begin position="12"/>
        <end position="69"/>
    </location>
</feature>
<feature type="DNA-binding region" evidence="1">
    <location>
        <begin position="429"/>
        <end position="438"/>
    </location>
</feature>
<feature type="region of interest" description="Disordered" evidence="5">
    <location>
        <begin position="345"/>
        <end position="375"/>
    </location>
</feature>
<feature type="binding site" evidence="2">
    <location>
        <position position="17"/>
    </location>
    <ligand>
        <name>Zn(2+)</name>
        <dbReference type="ChEBI" id="CHEBI:29105"/>
        <label>1</label>
    </ligand>
</feature>
<feature type="binding site" evidence="2">
    <location>
        <position position="20"/>
    </location>
    <ligand>
        <name>Zn(2+)</name>
        <dbReference type="ChEBI" id="CHEBI:29105"/>
        <label>1</label>
    </ligand>
</feature>
<feature type="binding site" evidence="2">
    <location>
        <position position="31"/>
    </location>
    <ligand>
        <name>Zn(2+)</name>
        <dbReference type="ChEBI" id="CHEBI:29105"/>
        <label>2</label>
    </ligand>
</feature>
<feature type="binding site" evidence="2">
    <location>
        <position position="34"/>
    </location>
    <ligand>
        <name>Zn(2+)</name>
        <dbReference type="ChEBI" id="CHEBI:29105"/>
        <label>2</label>
    </ligand>
</feature>
<feature type="binding site" evidence="2">
    <location>
        <position position="42"/>
    </location>
    <ligand>
        <name>Zn(2+)</name>
        <dbReference type="ChEBI" id="CHEBI:29105"/>
        <label>1</label>
    </ligand>
</feature>
<feature type="binding site" evidence="2">
    <location>
        <position position="45"/>
    </location>
    <ligand>
        <name>Zn(2+)</name>
        <dbReference type="ChEBI" id="CHEBI:29105"/>
        <label>1</label>
    </ligand>
</feature>
<feature type="binding site" evidence="2">
    <location>
        <position position="55"/>
    </location>
    <ligand>
        <name>Zn(2+)</name>
        <dbReference type="ChEBI" id="CHEBI:29105"/>
        <label>2</label>
    </ligand>
</feature>
<feature type="binding site" evidence="2">
    <location>
        <position position="59"/>
    </location>
    <ligand>
        <name>Zn(2+)</name>
        <dbReference type="ChEBI" id="CHEBI:29105"/>
        <label>2</label>
    </ligand>
</feature>
<name>TAD2A_CHICK</name>
<sequence>MERLASFGNDPFDKPPCRGCSSYLTEPYVKCAECGPPPFLLCLQCFTRGFEYKKHQSDHTYEIMTSDFPVLDPNWTAQEEMALLEAVMDCGFGNWQDVANQMCTKSKEECEKHYMKHFINNPLFASTLLNLKQAEEAQHNETAIPFHPADDPPRPTFDSLLSRDMAGYMPARARLSSRSFDNYAEWDLRDIDFVEDDSDILHALKIAVVDIYHSRFKREKTAGRKKIIRDHGLINLRKFQILERRYPKEVQDLYETMRRFARILGPVEHDKFIESHALEFELRREIKRLQEYRAAGITNFCSARTYDHLKKTRDEERLKRTMLSEVLQYIQDSSACQQWLSRQADIDSGPTPAAPIPSNSGRRSAPPLNLTGLPGTEKLNEKEKELCQMVRLVPGAYLEYKAALVNECNKQGGLRLAQARALIKIDVNKTRKIYDFLIREGYITKA</sequence>
<accession>Q5ZJF3</accession>
<reference key="1">
    <citation type="journal article" date="2005" name="Genome Biol.">
        <title>Full-length cDNAs from chicken bursal lymphocytes to facilitate gene function analysis.</title>
        <authorList>
            <person name="Caldwell R.B."/>
            <person name="Kierzek A.M."/>
            <person name="Arakawa H."/>
            <person name="Bezzubov Y."/>
            <person name="Zaim J."/>
            <person name="Fiedler P."/>
            <person name="Kutter S."/>
            <person name="Blagodatski A."/>
            <person name="Kostovska D."/>
            <person name="Koter M."/>
            <person name="Plachy J."/>
            <person name="Carninci P."/>
            <person name="Hayashizaki Y."/>
            <person name="Buerstedde J.-M."/>
        </authorList>
    </citation>
    <scope>NUCLEOTIDE SEQUENCE [LARGE SCALE MRNA]</scope>
    <source>
        <strain>CB</strain>
        <tissue>Bursa of Fabricius</tissue>
    </source>
</reference>
<comment type="function">
    <text evidence="1">Component of some complex with histone acetyltransferase activity. Required for the function of some acidic activation domains, which activate transcription from a distant site (By similarity). Binds double-stranded DNA. Binds dinucleosomes, probably at the linker region between neighboring nucleosomes. Plays a role in chromatin remodeling (By similarity).</text>
</comment>
<comment type="subcellular location">
    <subcellularLocation>
        <location evidence="4">Nucleus</location>
    </subcellularLocation>
    <subcellularLocation>
        <location evidence="1">Chromosome</location>
    </subcellularLocation>
</comment>
<organism>
    <name type="scientific">Gallus gallus</name>
    <name type="common">Chicken</name>
    <dbReference type="NCBI Taxonomy" id="9031"/>
    <lineage>
        <taxon>Eukaryota</taxon>
        <taxon>Metazoa</taxon>
        <taxon>Chordata</taxon>
        <taxon>Craniata</taxon>
        <taxon>Vertebrata</taxon>
        <taxon>Euteleostomi</taxon>
        <taxon>Archelosauria</taxon>
        <taxon>Archosauria</taxon>
        <taxon>Dinosauria</taxon>
        <taxon>Saurischia</taxon>
        <taxon>Theropoda</taxon>
        <taxon>Coelurosauria</taxon>
        <taxon>Aves</taxon>
        <taxon>Neognathae</taxon>
        <taxon>Galloanserae</taxon>
        <taxon>Galliformes</taxon>
        <taxon>Phasianidae</taxon>
        <taxon>Phasianinae</taxon>
        <taxon>Gallus</taxon>
    </lineage>
</organism>
<dbReference type="EMBL" id="AJ720481">
    <property type="protein sequence ID" value="CAG32140.1"/>
    <property type="molecule type" value="mRNA"/>
</dbReference>
<dbReference type="SMR" id="Q5ZJF3"/>
<dbReference type="FunCoup" id="Q5ZJF3">
    <property type="interactions" value="314"/>
</dbReference>
<dbReference type="STRING" id="9031.ENSGALP00000008736"/>
<dbReference type="GlyGen" id="Q5ZJF3">
    <property type="glycosylation" value="1 site"/>
</dbReference>
<dbReference type="PaxDb" id="9031-ENSGALP00000008736"/>
<dbReference type="VEuPathDB" id="HostDB:geneid_417656"/>
<dbReference type="eggNOG" id="KOG0457">
    <property type="taxonomic scope" value="Eukaryota"/>
</dbReference>
<dbReference type="InParanoid" id="Q5ZJF3"/>
<dbReference type="OrthoDB" id="270417at2759"/>
<dbReference type="PhylomeDB" id="Q5ZJF3"/>
<dbReference type="Proteomes" id="UP000000539">
    <property type="component" value="Unassembled WGS sequence"/>
</dbReference>
<dbReference type="GO" id="GO:0005634">
    <property type="term" value="C:nucleus"/>
    <property type="evidence" value="ECO:0000318"/>
    <property type="project" value="GO_Central"/>
</dbReference>
<dbReference type="GO" id="GO:0070461">
    <property type="term" value="C:SAGA-type complex"/>
    <property type="evidence" value="ECO:0000318"/>
    <property type="project" value="GO_Central"/>
</dbReference>
<dbReference type="GO" id="GO:0003682">
    <property type="term" value="F:chromatin binding"/>
    <property type="evidence" value="ECO:0000318"/>
    <property type="project" value="GO_Central"/>
</dbReference>
<dbReference type="GO" id="GO:0003677">
    <property type="term" value="F:DNA binding"/>
    <property type="evidence" value="ECO:0007669"/>
    <property type="project" value="UniProtKB-KW"/>
</dbReference>
<dbReference type="GO" id="GO:0003713">
    <property type="term" value="F:transcription coactivator activity"/>
    <property type="evidence" value="ECO:0000318"/>
    <property type="project" value="GO_Central"/>
</dbReference>
<dbReference type="GO" id="GO:0008270">
    <property type="term" value="F:zinc ion binding"/>
    <property type="evidence" value="ECO:0007669"/>
    <property type="project" value="UniProtKB-KW"/>
</dbReference>
<dbReference type="GO" id="GO:0006338">
    <property type="term" value="P:chromatin remodeling"/>
    <property type="evidence" value="ECO:0000318"/>
    <property type="project" value="GO_Central"/>
</dbReference>
<dbReference type="GO" id="GO:0006357">
    <property type="term" value="P:regulation of transcription by RNA polymerase II"/>
    <property type="evidence" value="ECO:0000318"/>
    <property type="project" value="GO_Central"/>
</dbReference>
<dbReference type="CDD" id="cd00167">
    <property type="entry name" value="SANT"/>
    <property type="match status" value="1"/>
</dbReference>
<dbReference type="CDD" id="cd02335">
    <property type="entry name" value="ZZ_ADA2"/>
    <property type="match status" value="1"/>
</dbReference>
<dbReference type="FunFam" id="1.10.10.60:FF:000110">
    <property type="entry name" value="Transcriptional adapter"/>
    <property type="match status" value="1"/>
</dbReference>
<dbReference type="FunFam" id="3.30.60.90:FF:000020">
    <property type="entry name" value="Transcriptional adapter"/>
    <property type="match status" value="1"/>
</dbReference>
<dbReference type="FunFam" id="1.10.10.10:FF:000087">
    <property type="entry name" value="Transcriptional adapter 2"/>
    <property type="match status" value="1"/>
</dbReference>
<dbReference type="Gene3D" id="3.30.60.90">
    <property type="match status" value="1"/>
</dbReference>
<dbReference type="Gene3D" id="1.10.10.60">
    <property type="entry name" value="Homeodomain-like"/>
    <property type="match status" value="1"/>
</dbReference>
<dbReference type="Gene3D" id="1.10.10.10">
    <property type="entry name" value="Winged helix-like DNA-binding domain superfamily/Winged helix DNA-binding domain"/>
    <property type="match status" value="1"/>
</dbReference>
<dbReference type="InterPro" id="IPR041983">
    <property type="entry name" value="ADA2-like_ZZ"/>
</dbReference>
<dbReference type="InterPro" id="IPR016827">
    <property type="entry name" value="Ada2/TADA2"/>
</dbReference>
<dbReference type="InterPro" id="IPR009057">
    <property type="entry name" value="Homeodomain-like_sf"/>
</dbReference>
<dbReference type="InterPro" id="IPR001005">
    <property type="entry name" value="SANT/Myb"/>
</dbReference>
<dbReference type="InterPro" id="IPR017884">
    <property type="entry name" value="SANT_dom"/>
</dbReference>
<dbReference type="InterPro" id="IPR007526">
    <property type="entry name" value="SWIRM"/>
</dbReference>
<dbReference type="InterPro" id="IPR055141">
    <property type="entry name" value="TADA2A_B-like_dom"/>
</dbReference>
<dbReference type="InterPro" id="IPR036388">
    <property type="entry name" value="WH-like_DNA-bd_sf"/>
</dbReference>
<dbReference type="InterPro" id="IPR000433">
    <property type="entry name" value="Znf_ZZ"/>
</dbReference>
<dbReference type="InterPro" id="IPR043145">
    <property type="entry name" value="Znf_ZZ_sf"/>
</dbReference>
<dbReference type="PANTHER" id="PTHR12374:SF20">
    <property type="entry name" value="TRANSCRIPTIONAL ADAPTER 2-ALPHA"/>
    <property type="match status" value="1"/>
</dbReference>
<dbReference type="PANTHER" id="PTHR12374">
    <property type="entry name" value="TRANSCRIPTIONAL ADAPTOR 2 ADA2 -RELATED"/>
    <property type="match status" value="1"/>
</dbReference>
<dbReference type="Pfam" id="PF00249">
    <property type="entry name" value="Myb_DNA-binding"/>
    <property type="match status" value="1"/>
</dbReference>
<dbReference type="Pfam" id="PF04433">
    <property type="entry name" value="SWIRM"/>
    <property type="match status" value="1"/>
</dbReference>
<dbReference type="Pfam" id="PF22941">
    <property type="entry name" value="TADA2A-like_3rd"/>
    <property type="match status" value="1"/>
</dbReference>
<dbReference type="Pfam" id="PF25299">
    <property type="entry name" value="ZZ_ADA2"/>
    <property type="match status" value="1"/>
</dbReference>
<dbReference type="PIRSF" id="PIRSF025024">
    <property type="entry name" value="Transcriptional_adaptor_2"/>
    <property type="match status" value="1"/>
</dbReference>
<dbReference type="SMART" id="SM00717">
    <property type="entry name" value="SANT"/>
    <property type="match status" value="1"/>
</dbReference>
<dbReference type="SUPFAM" id="SSF46689">
    <property type="entry name" value="Homeodomain-like"/>
    <property type="match status" value="2"/>
</dbReference>
<dbReference type="SUPFAM" id="SSF57850">
    <property type="entry name" value="RING/U-box"/>
    <property type="match status" value="1"/>
</dbReference>
<dbReference type="PROSITE" id="PS51293">
    <property type="entry name" value="SANT"/>
    <property type="match status" value="1"/>
</dbReference>
<dbReference type="PROSITE" id="PS50934">
    <property type="entry name" value="SWIRM"/>
    <property type="match status" value="1"/>
</dbReference>
<dbReference type="PROSITE" id="PS50135">
    <property type="entry name" value="ZF_ZZ_2"/>
    <property type="match status" value="1"/>
</dbReference>